<sequence length="99" mass="11229">MNDSAFKKIGNVLKDYLESNLLVNKKISSKLLIADKWNQIFEALSDDVKFLDFKNEQILFLEVSNSSILCSIAINKSKIINSVKELTGIKIIDIKVLVR</sequence>
<feature type="chain" id="PRO_0000174403" description="Uncharacterized protein BB_0439">
    <location>
        <begin position="1"/>
        <end position="99"/>
    </location>
</feature>
<gene>
    <name type="ordered locus">BB_0439</name>
</gene>
<dbReference type="EMBL" id="U04527">
    <property type="protein sequence ID" value="AAA58943.1"/>
    <property type="molecule type" value="Genomic_DNA"/>
</dbReference>
<dbReference type="EMBL" id="AE000783">
    <property type="protein sequence ID" value="AAB91513.1"/>
    <property type="molecule type" value="Genomic_DNA"/>
</dbReference>
<dbReference type="PIR" id="F70154">
    <property type="entry name" value="F70154"/>
</dbReference>
<dbReference type="RefSeq" id="NP_212573.1">
    <property type="nucleotide sequence ID" value="NC_001318.1"/>
</dbReference>
<dbReference type="RefSeq" id="WP_002657913.1">
    <property type="nucleotide sequence ID" value="NC_001318.1"/>
</dbReference>
<dbReference type="SMR" id="P33762"/>
<dbReference type="STRING" id="224326.BB_0439"/>
<dbReference type="PaxDb" id="224326-BB_0439"/>
<dbReference type="EnsemblBacteria" id="AAB91513">
    <property type="protein sequence ID" value="AAB91513"/>
    <property type="gene ID" value="BB_0439"/>
</dbReference>
<dbReference type="KEGG" id="bbu:BB_0439"/>
<dbReference type="PATRIC" id="fig|224326.49.peg.830"/>
<dbReference type="HOGENOM" id="CLU_2314745_0_0_12"/>
<dbReference type="OrthoDB" id="350887at2"/>
<dbReference type="Proteomes" id="UP000001807">
    <property type="component" value="Chromosome"/>
</dbReference>
<reference key="1">
    <citation type="journal article" date="1993" name="Nucleic Acids Res.">
        <title>Nucleotide sequence of the Borrelia burgdorferi dnaN gene encoding the beta subunit of DNA polymerase III.</title>
        <authorList>
            <person name="Old I.G."/>
            <person name="Margarita D."/>
            <person name="Saint-Girons I."/>
        </authorList>
    </citation>
    <scope>NUCLEOTIDE SEQUENCE [GENOMIC DNA]</scope>
    <source>
        <strain>212</strain>
    </source>
</reference>
<reference key="2">
    <citation type="journal article" date="1997" name="Nature">
        <title>Genomic sequence of a Lyme disease spirochaete, Borrelia burgdorferi.</title>
        <authorList>
            <person name="Fraser C.M."/>
            <person name="Casjens S."/>
            <person name="Huang W.M."/>
            <person name="Sutton G.G."/>
            <person name="Clayton R.A."/>
            <person name="Lathigra R."/>
            <person name="White O."/>
            <person name="Ketchum K.A."/>
            <person name="Dodson R.J."/>
            <person name="Hickey E.K."/>
            <person name="Gwinn M.L."/>
            <person name="Dougherty B.A."/>
            <person name="Tomb J.-F."/>
            <person name="Fleischmann R.D."/>
            <person name="Richardson D.L."/>
            <person name="Peterson J.D."/>
            <person name="Kerlavage A.R."/>
            <person name="Quackenbush J."/>
            <person name="Salzberg S.L."/>
            <person name="Hanson M."/>
            <person name="van Vugt R."/>
            <person name="Palmer N."/>
            <person name="Adams M.D."/>
            <person name="Gocayne J.D."/>
            <person name="Weidman J.F."/>
            <person name="Utterback T.R."/>
            <person name="Watthey L."/>
            <person name="McDonald L.A."/>
            <person name="Artiach P."/>
            <person name="Bowman C."/>
            <person name="Garland S.A."/>
            <person name="Fujii C."/>
            <person name="Cotton M.D."/>
            <person name="Horst K."/>
            <person name="Roberts K.M."/>
            <person name="Hatch B."/>
            <person name="Smith H.O."/>
            <person name="Venter J.C."/>
        </authorList>
    </citation>
    <scope>NUCLEOTIDE SEQUENCE [LARGE SCALE GENOMIC DNA]</scope>
    <source>
        <strain>ATCC 35210 / DSM 4680 / CIP 102532 / B31</strain>
    </source>
</reference>
<name>Y439_BORBU</name>
<organism>
    <name type="scientific">Borreliella burgdorferi (strain ATCC 35210 / DSM 4680 / CIP 102532 / B31)</name>
    <name type="common">Borrelia burgdorferi</name>
    <dbReference type="NCBI Taxonomy" id="224326"/>
    <lineage>
        <taxon>Bacteria</taxon>
        <taxon>Pseudomonadati</taxon>
        <taxon>Spirochaetota</taxon>
        <taxon>Spirochaetia</taxon>
        <taxon>Spirochaetales</taxon>
        <taxon>Borreliaceae</taxon>
        <taxon>Borreliella</taxon>
    </lineage>
</organism>
<keyword id="KW-1185">Reference proteome</keyword>
<protein>
    <recommendedName>
        <fullName>Uncharacterized protein BB_0439</fullName>
    </recommendedName>
</protein>
<proteinExistence type="predicted"/>
<accession>P33762</accession>